<reference key="1">
    <citation type="journal article" date="1996" name="J. Bacteriol.">
        <title>Genes associated with meningococcal capsule complex are also found in Neisseria gonorrhoeae.</title>
        <authorList>
            <person name="Petering H."/>
            <person name="Hammerschmidt S."/>
            <person name="Frosch M."/>
            <person name="van Putten J.P.M."/>
            <person name="Ison C.A."/>
            <person name="Robertson B.D."/>
        </authorList>
    </citation>
    <scope>NUCLEOTIDE SEQUENCE [GENOMIC DNA] OF 1-476</scope>
    <source>
        <strain>MS11 / E1</strain>
    </source>
</reference>
<reference key="2">
    <citation type="submission" date="2016-05" db="EMBL/GenBank/DDBJ databases">
        <authorList>
            <consortium name="Pathogen Informatics"/>
        </authorList>
    </citation>
    <scope>NUCLEOTIDE SEQUENCE [GENOMIC DNA]</scope>
    <source>
        <strain>07_302p</strain>
        <strain>WHO L</strain>
    </source>
</reference>
<reference key="3">
    <citation type="submission" date="2016-06" db="EMBL/GenBank/DDBJ databases">
        <authorList>
            <consortium name="Pathogen Informatics"/>
        </authorList>
    </citation>
    <scope>NUCLEOTIDE SEQUENCE [GENOMIC DNA]</scope>
    <source>
        <strain>07_302p</strain>
        <strain>WHO L</strain>
    </source>
</reference>
<protein>
    <recommendedName>
        <fullName>Transcriptional accessory protein Tex</fullName>
    </recommendedName>
</protein>
<evidence type="ECO:0000255" key="1">
    <source>
        <dbReference type="PROSITE-ProRule" id="PRU00180"/>
    </source>
</evidence>
<evidence type="ECO:0000256" key="2">
    <source>
        <dbReference type="SAM" id="MobiDB-lite"/>
    </source>
</evidence>
<gene>
    <name type="primary">tex</name>
    <name type="ORF">WHOL_00878</name>
    <name type="ORF">WHOL_01795</name>
    <name type="ORF">WHOU_01376</name>
    <name type="ORF">WHOU_02176</name>
</gene>
<accession>Q51062</accession>
<accession>A0A1D3HCZ8</accession>
<proteinExistence type="predicted"/>
<organism>
    <name type="scientific">Neisseria gonorrhoeae</name>
    <dbReference type="NCBI Taxonomy" id="485"/>
    <lineage>
        <taxon>Bacteria</taxon>
        <taxon>Pseudomonadati</taxon>
        <taxon>Pseudomonadota</taxon>
        <taxon>Betaproteobacteria</taxon>
        <taxon>Neisseriales</taxon>
        <taxon>Neisseriaceae</taxon>
        <taxon>Neisseria</taxon>
    </lineage>
</organism>
<sequence length="757" mass="83270">MNITRILSQELSATTVQINAAIELLDDGATVPFIARYRKEATGGLDDTQLRQLAERLQYLRELEERKAVVLKSIEEQGKLSDDLRAQIEAADNKTALEDLYLPYKPKRRTKAQIAHEHGLQPLADVLLAEQPQDVEAAAQGYLNENIPDAKAALDGARAILMEQFAEDAELIGTLRDKLWNEAEIHTQVVEGKETEGEKFSDYFDRREPVRAMPSHRALAVLRGRNEGVLNIALKYQPDDTPITQQSEYEQIIARRFKVSDGHKWLRDTVRLTWRAKIFLSLELEALNRLKEAADTDAITVFARNLKDLLLAAPAGRLTTLGLDPGYRNGVKCAVVDDTGKLLDTVIVYLHQENNMLATLSRLIKQHGVKLIAIGNGTASRETDKIAGELVRGMPESSLHKIVVSEAGASIYSASELAAREFPDLDVSLRGAVSIARRLQDPLAELVKIDPKSIGVGQYQHDVNQSRLAKSLDAVVEDCVNAVGVDANTASAPLLARISGLNQTLAQNIVAYRDENGAFDSRKKLLKVPRLGEKTFEQAAGFLRINGGKEPLDASAVHPEAYPVVAKMLAQQGITAAELIGNRERVKQIKASDFTDERFGLPTILDILSELEKPGRDPRGAFQTASFAEGIHEISDLQVGMILEGVVSNVANFGAFVDIGVHQDGLVHISALSNKFVQDPREVVKAGDVVKVKVLEVDAARKRIALTMRLDDEPGGAKHKMPSENRSRERTAGRKPQRNDRAPTNSAMADAFAKLKR</sequence>
<name>YHGF_NEIGO</name>
<feature type="chain" id="PRO_0000215106" description="Transcriptional accessory protein Tex">
    <location>
        <begin position="1"/>
        <end position="757"/>
    </location>
</feature>
<feature type="domain" description="S1 motif" evidence="1">
    <location>
        <begin position="640"/>
        <end position="709"/>
    </location>
</feature>
<feature type="region of interest" description="Disordered" evidence="2">
    <location>
        <begin position="710"/>
        <end position="757"/>
    </location>
</feature>
<feature type="compositionally biased region" description="Basic and acidic residues" evidence="2">
    <location>
        <begin position="710"/>
        <end position="741"/>
    </location>
</feature>
<keyword id="KW-0694">RNA-binding</keyword>
<dbReference type="EMBL" id="Z21508">
    <property type="protein sequence ID" value="CAA79717.1"/>
    <property type="molecule type" value="Genomic_DNA"/>
</dbReference>
<dbReference type="EMBL" id="FLLA01000008">
    <property type="protein sequence ID" value="SBM97256.1"/>
    <property type="molecule type" value="Genomic_DNA"/>
</dbReference>
<dbReference type="EMBL" id="FLKZ01000014">
    <property type="protein sequence ID" value="SBN05123.1"/>
    <property type="molecule type" value="Genomic_DNA"/>
</dbReference>
<dbReference type="EMBL" id="LT591901">
    <property type="protein sequence ID" value="SBO54567.1"/>
    <property type="molecule type" value="Genomic_DNA"/>
</dbReference>
<dbReference type="EMBL" id="LT592159">
    <property type="protein sequence ID" value="SBO72056.1"/>
    <property type="molecule type" value="Genomic_DNA"/>
</dbReference>
<dbReference type="RefSeq" id="WP_003690166.1">
    <property type="nucleotide sequence ID" value="NZ_WHPL01000002.1"/>
</dbReference>
<dbReference type="SMR" id="Q51062"/>
<dbReference type="PATRIC" id="fig|485.42.peg.1715"/>
<dbReference type="GO" id="GO:0005829">
    <property type="term" value="C:cytosol"/>
    <property type="evidence" value="ECO:0007669"/>
    <property type="project" value="TreeGrafter"/>
</dbReference>
<dbReference type="GO" id="GO:0003729">
    <property type="term" value="F:mRNA binding"/>
    <property type="evidence" value="ECO:0007669"/>
    <property type="project" value="TreeGrafter"/>
</dbReference>
<dbReference type="GO" id="GO:0003735">
    <property type="term" value="F:structural constituent of ribosome"/>
    <property type="evidence" value="ECO:0007669"/>
    <property type="project" value="TreeGrafter"/>
</dbReference>
<dbReference type="GO" id="GO:0006139">
    <property type="term" value="P:nucleobase-containing compound metabolic process"/>
    <property type="evidence" value="ECO:0007669"/>
    <property type="project" value="InterPro"/>
</dbReference>
<dbReference type="GO" id="GO:0006412">
    <property type="term" value="P:translation"/>
    <property type="evidence" value="ECO:0007669"/>
    <property type="project" value="TreeGrafter"/>
</dbReference>
<dbReference type="CDD" id="cd05685">
    <property type="entry name" value="S1_Tex"/>
    <property type="match status" value="1"/>
</dbReference>
<dbReference type="FunFam" id="1.10.150.310:FF:000001">
    <property type="entry name" value="RNA-binding transcriptional accessory protein"/>
    <property type="match status" value="1"/>
</dbReference>
<dbReference type="FunFam" id="2.40.50.140:FF:000051">
    <property type="entry name" value="RNA-binding transcriptional accessory protein"/>
    <property type="match status" value="1"/>
</dbReference>
<dbReference type="FunFam" id="3.30.420.140:FF:000001">
    <property type="entry name" value="RNA-binding transcriptional accessory protein"/>
    <property type="match status" value="1"/>
</dbReference>
<dbReference type="FunFam" id="1.10.10.650:FF:000001">
    <property type="entry name" value="S1 RNA-binding domain 1"/>
    <property type="match status" value="1"/>
</dbReference>
<dbReference type="Gene3D" id="2.40.50.140">
    <property type="entry name" value="Nucleic acid-binding proteins"/>
    <property type="match status" value="1"/>
</dbReference>
<dbReference type="Gene3D" id="1.10.10.650">
    <property type="entry name" value="RuvA domain 2-like"/>
    <property type="match status" value="1"/>
</dbReference>
<dbReference type="Gene3D" id="1.10.3500.10">
    <property type="entry name" value="Tex N-terminal region-like"/>
    <property type="match status" value="1"/>
</dbReference>
<dbReference type="Gene3D" id="1.10.150.310">
    <property type="entry name" value="Tex RuvX-like domain-like"/>
    <property type="match status" value="1"/>
</dbReference>
<dbReference type="Gene3D" id="3.30.420.140">
    <property type="entry name" value="YqgF/RNase H-like domain"/>
    <property type="match status" value="1"/>
</dbReference>
<dbReference type="InterPro" id="IPR041692">
    <property type="entry name" value="HHH_9"/>
</dbReference>
<dbReference type="InterPro" id="IPR012340">
    <property type="entry name" value="NA-bd_OB-fold"/>
</dbReference>
<dbReference type="InterPro" id="IPR050437">
    <property type="entry name" value="Ribos_protein_bS1-like"/>
</dbReference>
<dbReference type="InterPro" id="IPR012337">
    <property type="entry name" value="RNaseH-like_sf"/>
</dbReference>
<dbReference type="InterPro" id="IPR010994">
    <property type="entry name" value="RuvA_2-like"/>
</dbReference>
<dbReference type="InterPro" id="IPR003029">
    <property type="entry name" value="S1_domain"/>
</dbReference>
<dbReference type="InterPro" id="IPR044146">
    <property type="entry name" value="S1_Tex"/>
</dbReference>
<dbReference type="InterPro" id="IPR055179">
    <property type="entry name" value="Tex-like_central_region"/>
</dbReference>
<dbReference type="InterPro" id="IPR023323">
    <property type="entry name" value="Tex-like_dom_sf"/>
</dbReference>
<dbReference type="InterPro" id="IPR023319">
    <property type="entry name" value="Tex-like_HTH_dom_sf"/>
</dbReference>
<dbReference type="InterPro" id="IPR018974">
    <property type="entry name" value="Tex-like_N"/>
</dbReference>
<dbReference type="InterPro" id="IPR032639">
    <property type="entry name" value="Tex_YqgF"/>
</dbReference>
<dbReference type="InterPro" id="IPR006641">
    <property type="entry name" value="YqgF/RNaseH-like_dom"/>
</dbReference>
<dbReference type="InterPro" id="IPR037027">
    <property type="entry name" value="YqgF/RNaseH-like_dom_sf"/>
</dbReference>
<dbReference type="PANTHER" id="PTHR10724">
    <property type="entry name" value="30S RIBOSOMAL PROTEIN S1"/>
    <property type="match status" value="1"/>
</dbReference>
<dbReference type="PANTHER" id="PTHR10724:SF10">
    <property type="entry name" value="S1 RNA-BINDING DOMAIN-CONTAINING PROTEIN 1"/>
    <property type="match status" value="1"/>
</dbReference>
<dbReference type="Pfam" id="PF12836">
    <property type="entry name" value="HHH_3"/>
    <property type="match status" value="1"/>
</dbReference>
<dbReference type="Pfam" id="PF17674">
    <property type="entry name" value="HHH_9"/>
    <property type="match status" value="1"/>
</dbReference>
<dbReference type="Pfam" id="PF00575">
    <property type="entry name" value="S1"/>
    <property type="match status" value="1"/>
</dbReference>
<dbReference type="Pfam" id="PF22706">
    <property type="entry name" value="Tex_central_region"/>
    <property type="match status" value="1"/>
</dbReference>
<dbReference type="Pfam" id="PF09371">
    <property type="entry name" value="Tex_N"/>
    <property type="match status" value="1"/>
</dbReference>
<dbReference type="Pfam" id="PF16921">
    <property type="entry name" value="Tex_YqgF"/>
    <property type="match status" value="1"/>
</dbReference>
<dbReference type="SMART" id="SM00316">
    <property type="entry name" value="S1"/>
    <property type="match status" value="1"/>
</dbReference>
<dbReference type="SMART" id="SM00732">
    <property type="entry name" value="YqgFc"/>
    <property type="match status" value="1"/>
</dbReference>
<dbReference type="SUPFAM" id="SSF50249">
    <property type="entry name" value="Nucleic acid-binding proteins"/>
    <property type="match status" value="1"/>
</dbReference>
<dbReference type="SUPFAM" id="SSF53098">
    <property type="entry name" value="Ribonuclease H-like"/>
    <property type="match status" value="1"/>
</dbReference>
<dbReference type="SUPFAM" id="SSF47781">
    <property type="entry name" value="RuvA domain 2-like"/>
    <property type="match status" value="2"/>
</dbReference>
<dbReference type="SUPFAM" id="SSF158832">
    <property type="entry name" value="Tex N-terminal region-like"/>
    <property type="match status" value="1"/>
</dbReference>
<dbReference type="PROSITE" id="PS50126">
    <property type="entry name" value="S1"/>
    <property type="match status" value="1"/>
</dbReference>